<sequence length="505" mass="55338">MSRSYNDELQYLDKIHKNCWRIKKGFVPNMLVEGVFYVNDPLEKLMFEELRNACRGGGFGGFLPAMKQIGNVAALPGIVHRSIGLPDVHSGYGFAIGNMAAFDMENPDAVVSPGGVGFDINCGVRLLRTNLDEGDVQPVKEQLAQSLFDHIPVGVGSKGVIPMGAKDLEEALEMGVDWSLREGYAWAEDKEHCEEYGRMLQADPNKVSSKAKKRGLPQLGTLGAGNHYAEIQVVDEIYNDYAAKKMGIDHKGQVCVMIHSGSRGLGHQVATDALVAMEKAMKRDRITVNDRQLACARITSEEGQDYLKGMAAAGNYAWVNRSSMTFLTRQAFSKVFSTTPDDLDMHVIYDVSHNIAKVEEHMVDGRQKTLLVHRKGSTRAFPPHHPLIPVDYQLTGQPVLIGGTMGTCSYVLTGTEQGMTETFGTTCHGAGRALSRAKSRRNLDFQDVLDKLADMGIAIRVASPKLVMEEAPESYKNVTDVVNTCHDAGISKKAIKLRPIAVIKG</sequence>
<dbReference type="EC" id="6.5.1.8" evidence="2"/>
<dbReference type="EMBL" id="AL845512">
    <property type="protein sequence ID" value="CAI12003.1"/>
    <property type="molecule type" value="Genomic_DNA"/>
</dbReference>
<dbReference type="EMBL" id="BC065987">
    <property type="protein sequence ID" value="AAH65987.1"/>
    <property type="molecule type" value="mRNA"/>
</dbReference>
<dbReference type="RefSeq" id="NP_998268.1">
    <property type="nucleotide sequence ID" value="NM_213103.1"/>
</dbReference>
<dbReference type="SMR" id="Q6NZS4"/>
<dbReference type="FunCoup" id="Q6NZS4">
    <property type="interactions" value="1290"/>
</dbReference>
<dbReference type="STRING" id="7955.ENSDARP00000140069"/>
<dbReference type="PaxDb" id="7955-ENSDARP00000101805"/>
<dbReference type="Ensembl" id="ENSDART00000168167">
    <property type="protein sequence ID" value="ENSDARP00000140069"/>
    <property type="gene ID" value="ENSDARG00000101047"/>
</dbReference>
<dbReference type="GeneID" id="406376"/>
<dbReference type="KEGG" id="dre:406376"/>
<dbReference type="AGR" id="ZFIN:ZDB-GENE-040426-2096"/>
<dbReference type="CTD" id="51493"/>
<dbReference type="ZFIN" id="ZDB-GENE-040426-2096">
    <property type="gene designation" value="rtcb"/>
</dbReference>
<dbReference type="eggNOG" id="KOG3833">
    <property type="taxonomic scope" value="Eukaryota"/>
</dbReference>
<dbReference type="HOGENOM" id="CLU_022279_0_0_1"/>
<dbReference type="InParanoid" id="Q6NZS4"/>
<dbReference type="OMA" id="QTRGVEC"/>
<dbReference type="OrthoDB" id="10249697at2759"/>
<dbReference type="PhylomeDB" id="Q6NZS4"/>
<dbReference type="TreeFam" id="TF314404"/>
<dbReference type="PRO" id="PR:Q6NZS4"/>
<dbReference type="Proteomes" id="UP000000437">
    <property type="component" value="Chromosome 4"/>
</dbReference>
<dbReference type="Bgee" id="ENSDARG00000101047">
    <property type="expression patterns" value="Expressed in zone of skin and 25 other cell types or tissues"/>
</dbReference>
<dbReference type="ExpressionAtlas" id="Q6NZS4">
    <property type="expression patterns" value="baseline and differential"/>
</dbReference>
<dbReference type="GO" id="GO:0005737">
    <property type="term" value="C:cytoplasm"/>
    <property type="evidence" value="ECO:0000250"/>
    <property type="project" value="UniProtKB"/>
</dbReference>
<dbReference type="GO" id="GO:0005634">
    <property type="term" value="C:nucleus"/>
    <property type="evidence" value="ECO:0000250"/>
    <property type="project" value="UniProtKB"/>
</dbReference>
<dbReference type="GO" id="GO:0072669">
    <property type="term" value="C:tRNA-splicing ligase complex"/>
    <property type="evidence" value="ECO:0000250"/>
    <property type="project" value="UniProtKB"/>
</dbReference>
<dbReference type="GO" id="GO:0005525">
    <property type="term" value="F:GTP binding"/>
    <property type="evidence" value="ECO:0007669"/>
    <property type="project" value="UniProtKB-KW"/>
</dbReference>
<dbReference type="GO" id="GO:0046872">
    <property type="term" value="F:metal ion binding"/>
    <property type="evidence" value="ECO:0007669"/>
    <property type="project" value="UniProtKB-KW"/>
</dbReference>
<dbReference type="GO" id="GO:0170057">
    <property type="term" value="F:RNA ligase (GTP) activity"/>
    <property type="evidence" value="ECO:0000250"/>
    <property type="project" value="UniProtKB"/>
</dbReference>
<dbReference type="GO" id="GO:0006388">
    <property type="term" value="P:tRNA splicing, via endonucleolytic cleavage and ligation"/>
    <property type="evidence" value="ECO:0000250"/>
    <property type="project" value="UniProtKB"/>
</dbReference>
<dbReference type="FunFam" id="3.90.1860.10:FF:000001">
    <property type="entry name" value="tRNA-splicing ligase RtcB homolog"/>
    <property type="match status" value="1"/>
</dbReference>
<dbReference type="Gene3D" id="3.90.1860.10">
    <property type="entry name" value="tRNA-splicing ligase RtcB"/>
    <property type="match status" value="1"/>
</dbReference>
<dbReference type="HAMAP" id="MF_03144">
    <property type="entry name" value="RtcB_euk"/>
    <property type="match status" value="1"/>
</dbReference>
<dbReference type="InterPro" id="IPR001233">
    <property type="entry name" value="RtcB"/>
</dbReference>
<dbReference type="InterPro" id="IPR036025">
    <property type="entry name" value="RtcB-like_sf"/>
</dbReference>
<dbReference type="InterPro" id="IPR027513">
    <property type="entry name" value="RtcB_euk"/>
</dbReference>
<dbReference type="PANTHER" id="PTHR11118">
    <property type="entry name" value="RNA-SPLICING LIGASE RTCB HOMOLOG"/>
    <property type="match status" value="1"/>
</dbReference>
<dbReference type="PANTHER" id="PTHR11118:SF1">
    <property type="entry name" value="RNA-SPLICING LIGASE RTCB HOMOLOG"/>
    <property type="match status" value="1"/>
</dbReference>
<dbReference type="Pfam" id="PF01139">
    <property type="entry name" value="RtcB"/>
    <property type="match status" value="1"/>
</dbReference>
<dbReference type="SUPFAM" id="SSF103365">
    <property type="entry name" value="Hypothetical protein PH1602"/>
    <property type="match status" value="1"/>
</dbReference>
<dbReference type="PROSITE" id="PS01288">
    <property type="entry name" value="UPF0027"/>
    <property type="match status" value="1"/>
</dbReference>
<keyword id="KW-0963">Cytoplasm</keyword>
<keyword id="KW-0342">GTP-binding</keyword>
<keyword id="KW-0436">Ligase</keyword>
<keyword id="KW-0464">Manganese</keyword>
<keyword id="KW-0479">Metal-binding</keyword>
<keyword id="KW-0547">Nucleotide-binding</keyword>
<keyword id="KW-0539">Nucleus</keyword>
<keyword id="KW-1185">Reference proteome</keyword>
<keyword id="KW-0819">tRNA processing</keyword>
<reference key="1">
    <citation type="journal article" date="2013" name="Nature">
        <title>The zebrafish reference genome sequence and its relationship to the human genome.</title>
        <authorList>
            <person name="Howe K."/>
            <person name="Clark M.D."/>
            <person name="Torroja C.F."/>
            <person name="Torrance J."/>
            <person name="Berthelot C."/>
            <person name="Muffato M."/>
            <person name="Collins J.E."/>
            <person name="Humphray S."/>
            <person name="McLaren K."/>
            <person name="Matthews L."/>
            <person name="McLaren S."/>
            <person name="Sealy I."/>
            <person name="Caccamo M."/>
            <person name="Churcher C."/>
            <person name="Scott C."/>
            <person name="Barrett J.C."/>
            <person name="Koch R."/>
            <person name="Rauch G.J."/>
            <person name="White S."/>
            <person name="Chow W."/>
            <person name="Kilian B."/>
            <person name="Quintais L.T."/>
            <person name="Guerra-Assuncao J.A."/>
            <person name="Zhou Y."/>
            <person name="Gu Y."/>
            <person name="Yen J."/>
            <person name="Vogel J.H."/>
            <person name="Eyre T."/>
            <person name="Redmond S."/>
            <person name="Banerjee R."/>
            <person name="Chi J."/>
            <person name="Fu B."/>
            <person name="Langley E."/>
            <person name="Maguire S.F."/>
            <person name="Laird G.K."/>
            <person name="Lloyd D."/>
            <person name="Kenyon E."/>
            <person name="Donaldson S."/>
            <person name="Sehra H."/>
            <person name="Almeida-King J."/>
            <person name="Loveland J."/>
            <person name="Trevanion S."/>
            <person name="Jones M."/>
            <person name="Quail M."/>
            <person name="Willey D."/>
            <person name="Hunt A."/>
            <person name="Burton J."/>
            <person name="Sims S."/>
            <person name="McLay K."/>
            <person name="Plumb B."/>
            <person name="Davis J."/>
            <person name="Clee C."/>
            <person name="Oliver K."/>
            <person name="Clark R."/>
            <person name="Riddle C."/>
            <person name="Elliot D."/>
            <person name="Threadgold G."/>
            <person name="Harden G."/>
            <person name="Ware D."/>
            <person name="Begum S."/>
            <person name="Mortimore B."/>
            <person name="Kerry G."/>
            <person name="Heath P."/>
            <person name="Phillimore B."/>
            <person name="Tracey A."/>
            <person name="Corby N."/>
            <person name="Dunn M."/>
            <person name="Johnson C."/>
            <person name="Wood J."/>
            <person name="Clark S."/>
            <person name="Pelan S."/>
            <person name="Griffiths G."/>
            <person name="Smith M."/>
            <person name="Glithero R."/>
            <person name="Howden P."/>
            <person name="Barker N."/>
            <person name="Lloyd C."/>
            <person name="Stevens C."/>
            <person name="Harley J."/>
            <person name="Holt K."/>
            <person name="Panagiotidis G."/>
            <person name="Lovell J."/>
            <person name="Beasley H."/>
            <person name="Henderson C."/>
            <person name="Gordon D."/>
            <person name="Auger K."/>
            <person name="Wright D."/>
            <person name="Collins J."/>
            <person name="Raisen C."/>
            <person name="Dyer L."/>
            <person name="Leung K."/>
            <person name="Robertson L."/>
            <person name="Ambridge K."/>
            <person name="Leongamornlert D."/>
            <person name="McGuire S."/>
            <person name="Gilderthorp R."/>
            <person name="Griffiths C."/>
            <person name="Manthravadi D."/>
            <person name="Nichol S."/>
            <person name="Barker G."/>
            <person name="Whitehead S."/>
            <person name="Kay M."/>
            <person name="Brown J."/>
            <person name="Murnane C."/>
            <person name="Gray E."/>
            <person name="Humphries M."/>
            <person name="Sycamore N."/>
            <person name="Barker D."/>
            <person name="Saunders D."/>
            <person name="Wallis J."/>
            <person name="Babbage A."/>
            <person name="Hammond S."/>
            <person name="Mashreghi-Mohammadi M."/>
            <person name="Barr L."/>
            <person name="Martin S."/>
            <person name="Wray P."/>
            <person name="Ellington A."/>
            <person name="Matthews N."/>
            <person name="Ellwood M."/>
            <person name="Woodmansey R."/>
            <person name="Clark G."/>
            <person name="Cooper J."/>
            <person name="Tromans A."/>
            <person name="Grafham D."/>
            <person name="Skuce C."/>
            <person name="Pandian R."/>
            <person name="Andrews R."/>
            <person name="Harrison E."/>
            <person name="Kimberley A."/>
            <person name="Garnett J."/>
            <person name="Fosker N."/>
            <person name="Hall R."/>
            <person name="Garner P."/>
            <person name="Kelly D."/>
            <person name="Bird C."/>
            <person name="Palmer S."/>
            <person name="Gehring I."/>
            <person name="Berger A."/>
            <person name="Dooley C.M."/>
            <person name="Ersan-Urun Z."/>
            <person name="Eser C."/>
            <person name="Geiger H."/>
            <person name="Geisler M."/>
            <person name="Karotki L."/>
            <person name="Kirn A."/>
            <person name="Konantz J."/>
            <person name="Konantz M."/>
            <person name="Oberlander M."/>
            <person name="Rudolph-Geiger S."/>
            <person name="Teucke M."/>
            <person name="Lanz C."/>
            <person name="Raddatz G."/>
            <person name="Osoegawa K."/>
            <person name="Zhu B."/>
            <person name="Rapp A."/>
            <person name="Widaa S."/>
            <person name="Langford C."/>
            <person name="Yang F."/>
            <person name="Schuster S.C."/>
            <person name="Carter N.P."/>
            <person name="Harrow J."/>
            <person name="Ning Z."/>
            <person name="Herrero J."/>
            <person name="Searle S.M."/>
            <person name="Enright A."/>
            <person name="Geisler R."/>
            <person name="Plasterk R.H."/>
            <person name="Lee C."/>
            <person name="Westerfield M."/>
            <person name="de Jong P.J."/>
            <person name="Zon L.I."/>
            <person name="Postlethwait J.H."/>
            <person name="Nusslein-Volhard C."/>
            <person name="Hubbard T.J."/>
            <person name="Roest Crollius H."/>
            <person name="Rogers J."/>
            <person name="Stemple D.L."/>
        </authorList>
    </citation>
    <scope>NUCLEOTIDE SEQUENCE [LARGE SCALE GENOMIC DNA]</scope>
    <source>
        <strain>Tuebingen</strain>
    </source>
</reference>
<reference key="2">
    <citation type="submission" date="2004-02" db="EMBL/GenBank/DDBJ databases">
        <authorList>
            <consortium name="NIH - Zebrafish Gene Collection (ZGC) project"/>
        </authorList>
    </citation>
    <scope>NUCLEOTIDE SEQUENCE [LARGE SCALE MRNA]</scope>
    <source>
        <tissue>Embryo</tissue>
    </source>
</reference>
<evidence type="ECO:0000250" key="1"/>
<evidence type="ECO:0000255" key="2">
    <source>
        <dbReference type="HAMAP-Rule" id="MF_03144"/>
    </source>
</evidence>
<gene>
    <name evidence="2" type="primary">rtcb</name>
    <name type="ORF">zgc:76871</name>
</gene>
<name>RTCB_DANRE</name>
<comment type="function">
    <text evidence="2">Catalytic subunit of the tRNA-splicing ligase complex that acts by directly joining spliced tRNA halves to mature-sized tRNAs by incorporating the precursor-derived splice junction phosphate into the mature tRNA as a canonical 3',5'-phosphodiester. May act as an RNA ligase with broad substrate specificity, and may function toward other RNAs.</text>
</comment>
<comment type="catalytic activity">
    <reaction evidence="2">
        <text>a 3'-end 3'-phospho-ribonucleotide-RNA + a 5'-end dephospho-ribonucleoside-RNA + GTP = a ribonucleotidyl-ribonucleotide-RNA + GMP + diphosphate</text>
        <dbReference type="Rhea" id="RHEA:68076"/>
        <dbReference type="Rhea" id="RHEA-COMP:10463"/>
        <dbReference type="Rhea" id="RHEA-COMP:13936"/>
        <dbReference type="Rhea" id="RHEA-COMP:17355"/>
        <dbReference type="ChEBI" id="CHEBI:33019"/>
        <dbReference type="ChEBI" id="CHEBI:37565"/>
        <dbReference type="ChEBI" id="CHEBI:58115"/>
        <dbReference type="ChEBI" id="CHEBI:83062"/>
        <dbReference type="ChEBI" id="CHEBI:138284"/>
        <dbReference type="ChEBI" id="CHEBI:173118"/>
        <dbReference type="EC" id="6.5.1.8"/>
    </reaction>
</comment>
<comment type="catalytic activity">
    <reaction evidence="2">
        <text>a 3'-end 2',3'-cyclophospho-ribonucleotide-RNA + a 5'-end dephospho-ribonucleoside-RNA + GTP + H2O = a ribonucleotidyl-ribonucleotide-RNA + GMP + diphosphate + H(+)</text>
        <dbReference type="Rhea" id="RHEA:68080"/>
        <dbReference type="Rhea" id="RHEA-COMP:10464"/>
        <dbReference type="Rhea" id="RHEA-COMP:13936"/>
        <dbReference type="Rhea" id="RHEA-COMP:17355"/>
        <dbReference type="ChEBI" id="CHEBI:15377"/>
        <dbReference type="ChEBI" id="CHEBI:15378"/>
        <dbReference type="ChEBI" id="CHEBI:33019"/>
        <dbReference type="ChEBI" id="CHEBI:37565"/>
        <dbReference type="ChEBI" id="CHEBI:58115"/>
        <dbReference type="ChEBI" id="CHEBI:83064"/>
        <dbReference type="ChEBI" id="CHEBI:138284"/>
        <dbReference type="ChEBI" id="CHEBI:173118"/>
        <dbReference type="EC" id="6.5.1.8"/>
    </reaction>
</comment>
<comment type="cofactor">
    <cofactor evidence="2">
        <name>Mn(2+)</name>
        <dbReference type="ChEBI" id="CHEBI:29035"/>
    </cofactor>
    <text evidence="2">Binds 2 manganese ions per subunit.</text>
</comment>
<comment type="subunit">
    <text evidence="2">Catalytic component of the tRNA-splicing ligase complex.</text>
</comment>
<comment type="subcellular location">
    <subcellularLocation>
        <location evidence="1">Nucleus</location>
    </subcellularLocation>
    <subcellularLocation>
        <location evidence="2">Cytoplasm</location>
    </subcellularLocation>
</comment>
<comment type="miscellaneous">
    <text evidence="2">Ligation probably proceeds through 3 nucleotidyl transfer steps, with 2',3'-cyclic phosphate termini being hydrolyzed to 3'-P termini in a step that precedes 3'-P activation with GMP. In the first nucleotidyl transfer step, RTCB reacts with GTP to form a covalent RTCB-histidine-GMP intermediate with release of PPi; in the second step, the GMP moiety is transferred to the RNA 3'-P; in the third step, the 5'-OH from the opposite RNA strand attacks the activated 3'-P to form a 3',5'-phosphodiester bond and release GMP.</text>
</comment>
<comment type="similarity">
    <text evidence="2">Belongs to the RtcB family.</text>
</comment>
<proteinExistence type="evidence at transcript level"/>
<feature type="chain" id="PRO_0000255246" description="RNA-splicing ligase RtcB homolog">
    <location>
        <begin position="1"/>
        <end position="505"/>
    </location>
</feature>
<feature type="active site" description="GMP-histidine intermediate" evidence="2">
    <location>
        <position position="428"/>
    </location>
</feature>
<feature type="binding site" evidence="2">
    <location>
        <position position="119"/>
    </location>
    <ligand>
        <name>Mn(2+)</name>
        <dbReference type="ChEBI" id="CHEBI:29035"/>
        <label>1</label>
    </ligand>
</feature>
<feature type="binding site" evidence="2">
    <location>
        <position position="122"/>
    </location>
    <ligand>
        <name>Mn(2+)</name>
        <dbReference type="ChEBI" id="CHEBI:29035"/>
        <label>1</label>
    </ligand>
</feature>
<feature type="binding site" evidence="2">
    <location>
        <position position="122"/>
    </location>
    <ligand>
        <name>Mn(2+)</name>
        <dbReference type="ChEBI" id="CHEBI:29035"/>
        <label>2</label>
    </ligand>
</feature>
<feature type="binding site" evidence="2">
    <location>
        <begin position="226"/>
        <end position="230"/>
    </location>
    <ligand>
        <name>GMP</name>
        <dbReference type="ChEBI" id="CHEBI:58115"/>
    </ligand>
</feature>
<feature type="binding site" evidence="2">
    <location>
        <position position="227"/>
    </location>
    <ligand>
        <name>Mn(2+)</name>
        <dbReference type="ChEBI" id="CHEBI:29035"/>
        <label>1</label>
    </ligand>
</feature>
<feature type="binding site" evidence="2">
    <location>
        <position position="259"/>
    </location>
    <ligand>
        <name>Mn(2+)</name>
        <dbReference type="ChEBI" id="CHEBI:29035"/>
        <label>2</label>
    </ligand>
</feature>
<feature type="binding site" evidence="2">
    <location>
        <begin position="353"/>
        <end position="354"/>
    </location>
    <ligand>
        <name>GMP</name>
        <dbReference type="ChEBI" id="CHEBI:58115"/>
    </ligand>
</feature>
<feature type="binding site" evidence="2">
    <location>
        <position position="353"/>
    </location>
    <ligand>
        <name>Mn(2+)</name>
        <dbReference type="ChEBI" id="CHEBI:29035"/>
        <label>2</label>
    </ligand>
</feature>
<feature type="binding site" evidence="2">
    <location>
        <begin position="402"/>
        <end position="405"/>
    </location>
    <ligand>
        <name>GMP</name>
        <dbReference type="ChEBI" id="CHEBI:58115"/>
    </ligand>
</feature>
<feature type="binding site" evidence="2">
    <location>
        <position position="409"/>
    </location>
    <ligand>
        <name>GMP</name>
        <dbReference type="ChEBI" id="CHEBI:58115"/>
    </ligand>
</feature>
<feature type="binding site" evidence="2">
    <location>
        <begin position="428"/>
        <end position="431"/>
    </location>
    <ligand>
        <name>GMP</name>
        <dbReference type="ChEBI" id="CHEBI:58115"/>
    </ligand>
</feature>
<feature type="binding site" evidence="2">
    <location>
        <position position="504"/>
    </location>
    <ligand>
        <name>GMP</name>
        <dbReference type="ChEBI" id="CHEBI:58115"/>
    </ligand>
</feature>
<accession>Q6NZS4</accession>
<organism>
    <name type="scientific">Danio rerio</name>
    <name type="common">Zebrafish</name>
    <name type="synonym">Brachydanio rerio</name>
    <dbReference type="NCBI Taxonomy" id="7955"/>
    <lineage>
        <taxon>Eukaryota</taxon>
        <taxon>Metazoa</taxon>
        <taxon>Chordata</taxon>
        <taxon>Craniata</taxon>
        <taxon>Vertebrata</taxon>
        <taxon>Euteleostomi</taxon>
        <taxon>Actinopterygii</taxon>
        <taxon>Neopterygii</taxon>
        <taxon>Teleostei</taxon>
        <taxon>Ostariophysi</taxon>
        <taxon>Cypriniformes</taxon>
        <taxon>Danionidae</taxon>
        <taxon>Danioninae</taxon>
        <taxon>Danio</taxon>
    </lineage>
</organism>
<protein>
    <recommendedName>
        <fullName evidence="2">RNA-splicing ligase RtcB homolog</fullName>
        <ecNumber evidence="2">6.5.1.8</ecNumber>
    </recommendedName>
    <alternativeName>
        <fullName evidence="2">3'-phosphate/5'-hydroxy nucleic acid ligase</fullName>
    </alternativeName>
</protein>